<sequence length="239" mass="27140">MPYQLENRPPDLRESMYFPEIIRGIGTITKHFLKNLFFSRDANPDILARKRGGFGHSDNVTLQYPEERAPYAPAYRGLHRLVPREDGKPRCVACYMCATICPAQCIYIEAAEYPDDPVEKYPAKFVIDELRCIVCGFCVEACPKDAIRMDSGEHTPPSYERSAQIWDEKRLLRGPPVSYQYDPWLRRGSPSIPPDKLEEMRARAKPFPTVATDEASQTPGFSVRALAAEAKDRAQAARK</sequence>
<proteinExistence type="inferred from homology"/>
<evidence type="ECO:0000255" key="1">
    <source>
        <dbReference type="HAMAP-Rule" id="MF_01351"/>
    </source>
</evidence>
<protein>
    <recommendedName>
        <fullName evidence="1">NADH-quinone oxidoreductase subunit I 1</fullName>
        <ecNumber evidence="1">7.1.1.-</ecNumber>
    </recommendedName>
    <alternativeName>
        <fullName evidence="1">NADH dehydrogenase I subunit I 1</fullName>
    </alternativeName>
    <alternativeName>
        <fullName evidence="1">NDH-1 subunit I 1</fullName>
    </alternativeName>
</protein>
<gene>
    <name evidence="1" type="primary">nuoI1</name>
    <name type="ordered locus">Adeh_2564</name>
</gene>
<accession>Q2IL01</accession>
<name>NUOI1_ANADE</name>
<dbReference type="EC" id="7.1.1.-" evidence="1"/>
<dbReference type="EMBL" id="CP000251">
    <property type="protein sequence ID" value="ABC82334.1"/>
    <property type="molecule type" value="Genomic_DNA"/>
</dbReference>
<dbReference type="RefSeq" id="WP_011421616.1">
    <property type="nucleotide sequence ID" value="NC_007760.1"/>
</dbReference>
<dbReference type="SMR" id="Q2IL01"/>
<dbReference type="STRING" id="290397.Adeh_2564"/>
<dbReference type="KEGG" id="ade:Adeh_2564"/>
<dbReference type="eggNOG" id="COG1143">
    <property type="taxonomic scope" value="Bacteria"/>
</dbReference>
<dbReference type="HOGENOM" id="CLU_067218_4_3_7"/>
<dbReference type="OrthoDB" id="9808559at2"/>
<dbReference type="Proteomes" id="UP000001935">
    <property type="component" value="Chromosome"/>
</dbReference>
<dbReference type="GO" id="GO:0005886">
    <property type="term" value="C:plasma membrane"/>
    <property type="evidence" value="ECO:0007669"/>
    <property type="project" value="UniProtKB-SubCell"/>
</dbReference>
<dbReference type="GO" id="GO:0051539">
    <property type="term" value="F:4 iron, 4 sulfur cluster binding"/>
    <property type="evidence" value="ECO:0007669"/>
    <property type="project" value="UniProtKB-KW"/>
</dbReference>
<dbReference type="GO" id="GO:0005506">
    <property type="term" value="F:iron ion binding"/>
    <property type="evidence" value="ECO:0007669"/>
    <property type="project" value="UniProtKB-UniRule"/>
</dbReference>
<dbReference type="GO" id="GO:0050136">
    <property type="term" value="F:NADH:ubiquinone reductase (non-electrogenic) activity"/>
    <property type="evidence" value="ECO:0007669"/>
    <property type="project" value="UniProtKB-UniRule"/>
</dbReference>
<dbReference type="GO" id="GO:0048038">
    <property type="term" value="F:quinone binding"/>
    <property type="evidence" value="ECO:0007669"/>
    <property type="project" value="UniProtKB-KW"/>
</dbReference>
<dbReference type="Gene3D" id="3.30.70.3270">
    <property type="match status" value="1"/>
</dbReference>
<dbReference type="HAMAP" id="MF_01351">
    <property type="entry name" value="NDH1_NuoI"/>
    <property type="match status" value="1"/>
</dbReference>
<dbReference type="InterPro" id="IPR017896">
    <property type="entry name" value="4Fe4S_Fe-S-bd"/>
</dbReference>
<dbReference type="InterPro" id="IPR017900">
    <property type="entry name" value="4Fe4S_Fe_S_CS"/>
</dbReference>
<dbReference type="InterPro" id="IPR010226">
    <property type="entry name" value="NADH_quinone_OxRdtase_chainI"/>
</dbReference>
<dbReference type="PANTHER" id="PTHR10849">
    <property type="entry name" value="NADH DEHYDROGENASE UBIQUINONE IRON-SULFUR PROTEIN 8, MITOCHONDRIAL"/>
    <property type="match status" value="1"/>
</dbReference>
<dbReference type="Pfam" id="PF00037">
    <property type="entry name" value="Fer4"/>
    <property type="match status" value="1"/>
</dbReference>
<dbReference type="SUPFAM" id="SSF54862">
    <property type="entry name" value="4Fe-4S ferredoxins"/>
    <property type="match status" value="1"/>
</dbReference>
<dbReference type="PROSITE" id="PS00198">
    <property type="entry name" value="4FE4S_FER_1"/>
    <property type="match status" value="2"/>
</dbReference>
<dbReference type="PROSITE" id="PS51379">
    <property type="entry name" value="4FE4S_FER_2"/>
    <property type="match status" value="2"/>
</dbReference>
<reference key="1">
    <citation type="submission" date="2006-01" db="EMBL/GenBank/DDBJ databases">
        <title>Complete sequence of Anaeromyxobacter dehalogenans 2CP-C.</title>
        <authorList>
            <person name="Copeland A."/>
            <person name="Lucas S."/>
            <person name="Lapidus A."/>
            <person name="Barry K."/>
            <person name="Detter J.C."/>
            <person name="Glavina T."/>
            <person name="Hammon N."/>
            <person name="Israni S."/>
            <person name="Pitluck S."/>
            <person name="Brettin T."/>
            <person name="Bruce D."/>
            <person name="Han C."/>
            <person name="Tapia R."/>
            <person name="Gilna P."/>
            <person name="Kiss H."/>
            <person name="Schmutz J."/>
            <person name="Larimer F."/>
            <person name="Land M."/>
            <person name="Kyrpides N."/>
            <person name="Anderson I."/>
            <person name="Sanford R.A."/>
            <person name="Ritalahti K.M."/>
            <person name="Thomas H.S."/>
            <person name="Kirby J.R."/>
            <person name="Zhulin I.B."/>
            <person name="Loeffler F.E."/>
            <person name="Richardson P."/>
        </authorList>
    </citation>
    <scope>NUCLEOTIDE SEQUENCE [LARGE SCALE GENOMIC DNA]</scope>
    <source>
        <strain>2CP-C</strain>
    </source>
</reference>
<keyword id="KW-0004">4Fe-4S</keyword>
<keyword id="KW-0997">Cell inner membrane</keyword>
<keyword id="KW-1003">Cell membrane</keyword>
<keyword id="KW-0408">Iron</keyword>
<keyword id="KW-0411">Iron-sulfur</keyword>
<keyword id="KW-0472">Membrane</keyword>
<keyword id="KW-0479">Metal-binding</keyword>
<keyword id="KW-0520">NAD</keyword>
<keyword id="KW-0874">Quinone</keyword>
<keyword id="KW-1185">Reference proteome</keyword>
<keyword id="KW-0677">Repeat</keyword>
<keyword id="KW-1278">Translocase</keyword>
<keyword id="KW-0830">Ubiquinone</keyword>
<feature type="chain" id="PRO_0000245696" description="NADH-quinone oxidoreductase subunit I 1">
    <location>
        <begin position="1"/>
        <end position="239"/>
    </location>
</feature>
<feature type="domain" description="4Fe-4S ferredoxin-type 1" evidence="1">
    <location>
        <begin position="81"/>
        <end position="111"/>
    </location>
</feature>
<feature type="domain" description="4Fe-4S ferredoxin-type 2" evidence="1">
    <location>
        <begin position="123"/>
        <end position="152"/>
    </location>
</feature>
<feature type="binding site" evidence="1">
    <location>
        <position position="91"/>
    </location>
    <ligand>
        <name>[4Fe-4S] cluster</name>
        <dbReference type="ChEBI" id="CHEBI:49883"/>
        <label>1</label>
    </ligand>
</feature>
<feature type="binding site" evidence="1">
    <location>
        <position position="94"/>
    </location>
    <ligand>
        <name>[4Fe-4S] cluster</name>
        <dbReference type="ChEBI" id="CHEBI:49883"/>
        <label>1</label>
    </ligand>
</feature>
<feature type="binding site" evidence="1">
    <location>
        <position position="97"/>
    </location>
    <ligand>
        <name>[4Fe-4S] cluster</name>
        <dbReference type="ChEBI" id="CHEBI:49883"/>
        <label>1</label>
    </ligand>
</feature>
<feature type="binding site" evidence="1">
    <location>
        <position position="101"/>
    </location>
    <ligand>
        <name>[4Fe-4S] cluster</name>
        <dbReference type="ChEBI" id="CHEBI:49883"/>
        <label>2</label>
    </ligand>
</feature>
<feature type="binding site" evidence="1">
    <location>
        <position position="132"/>
    </location>
    <ligand>
        <name>[4Fe-4S] cluster</name>
        <dbReference type="ChEBI" id="CHEBI:49883"/>
        <label>2</label>
    </ligand>
</feature>
<feature type="binding site" evidence="1">
    <location>
        <position position="135"/>
    </location>
    <ligand>
        <name>[4Fe-4S] cluster</name>
        <dbReference type="ChEBI" id="CHEBI:49883"/>
        <label>2</label>
    </ligand>
</feature>
<feature type="binding site" evidence="1">
    <location>
        <position position="138"/>
    </location>
    <ligand>
        <name>[4Fe-4S] cluster</name>
        <dbReference type="ChEBI" id="CHEBI:49883"/>
        <label>2</label>
    </ligand>
</feature>
<feature type="binding site" evidence="1">
    <location>
        <position position="142"/>
    </location>
    <ligand>
        <name>[4Fe-4S] cluster</name>
        <dbReference type="ChEBI" id="CHEBI:49883"/>
        <label>1</label>
    </ligand>
</feature>
<organism>
    <name type="scientific">Anaeromyxobacter dehalogenans (strain 2CP-C)</name>
    <dbReference type="NCBI Taxonomy" id="290397"/>
    <lineage>
        <taxon>Bacteria</taxon>
        <taxon>Pseudomonadati</taxon>
        <taxon>Myxococcota</taxon>
        <taxon>Myxococcia</taxon>
        <taxon>Myxococcales</taxon>
        <taxon>Cystobacterineae</taxon>
        <taxon>Anaeromyxobacteraceae</taxon>
        <taxon>Anaeromyxobacter</taxon>
    </lineage>
</organism>
<comment type="function">
    <text evidence="1">NDH-1 shuttles electrons from NADH, via FMN and iron-sulfur (Fe-S) centers, to quinones in the respiratory chain. The immediate electron acceptor for the enzyme in this species is believed to be ubiquinone. Couples the redox reaction to proton translocation (for every two electrons transferred, four hydrogen ions are translocated across the cytoplasmic membrane), and thus conserves the redox energy in a proton gradient.</text>
</comment>
<comment type="catalytic activity">
    <reaction evidence="1">
        <text>a quinone + NADH + 5 H(+)(in) = a quinol + NAD(+) + 4 H(+)(out)</text>
        <dbReference type="Rhea" id="RHEA:57888"/>
        <dbReference type="ChEBI" id="CHEBI:15378"/>
        <dbReference type="ChEBI" id="CHEBI:24646"/>
        <dbReference type="ChEBI" id="CHEBI:57540"/>
        <dbReference type="ChEBI" id="CHEBI:57945"/>
        <dbReference type="ChEBI" id="CHEBI:132124"/>
    </reaction>
</comment>
<comment type="cofactor">
    <cofactor evidence="1">
        <name>[4Fe-4S] cluster</name>
        <dbReference type="ChEBI" id="CHEBI:49883"/>
    </cofactor>
    <text evidence="1">Binds 2 [4Fe-4S] clusters per subunit.</text>
</comment>
<comment type="subunit">
    <text evidence="1">NDH-1 is composed of 14 different subunits. Subunits NuoA, H, J, K, L, M, N constitute the membrane sector of the complex.</text>
</comment>
<comment type="subcellular location">
    <subcellularLocation>
        <location evidence="1">Cell inner membrane</location>
        <topology evidence="1">Peripheral membrane protein</topology>
    </subcellularLocation>
</comment>
<comment type="similarity">
    <text evidence="1">Belongs to the complex I 23 kDa subunit family.</text>
</comment>